<proteinExistence type="evidence at protein level"/>
<comment type="function">
    <text evidence="1">Together with thiosulfate sulfurtransferase (TST), acts as a mitochondrial import factor for the cytosolic 5S rRNA. The precursor form shows RNA chaperone activity; is able to fold the 5S rRNA into an import-competent conformation that is recognized by rhodanese (TST). Both the cytoplasmic and mitochondrial forms are able to bind to the helix IV-loop D in the gamma domain of the 5S rRNA (By similarity).</text>
</comment>
<comment type="subunit">
    <text evidence="1">Component of the mitochondrial ribosome large subunit (39S) which comprises a 16S rRNA and about 50 distinct proteins.</text>
</comment>
<comment type="subcellular location">
    <subcellularLocation>
        <location evidence="1">Mitochondrion</location>
    </subcellularLocation>
</comment>
<comment type="similarity">
    <text evidence="3">Belongs to the universal ribosomal protein uL18 family.</text>
</comment>
<protein>
    <recommendedName>
        <fullName evidence="3">Large ribosomal subunit protein uL18m</fullName>
    </recommendedName>
    <alternativeName>
        <fullName>39S ribosomal protein L18, mitochondrial</fullName>
        <shortName>L18mt</shortName>
        <shortName>MRP-L18</shortName>
    </alternativeName>
</protein>
<accession>Q9CQL5</accession>
<accession>Q9D6N7</accession>
<reference key="1">
    <citation type="journal article" date="2005" name="Science">
        <title>The transcriptional landscape of the mammalian genome.</title>
        <authorList>
            <person name="Carninci P."/>
            <person name="Kasukawa T."/>
            <person name="Katayama S."/>
            <person name="Gough J."/>
            <person name="Frith M.C."/>
            <person name="Maeda N."/>
            <person name="Oyama R."/>
            <person name="Ravasi T."/>
            <person name="Lenhard B."/>
            <person name="Wells C."/>
            <person name="Kodzius R."/>
            <person name="Shimokawa K."/>
            <person name="Bajic V.B."/>
            <person name="Brenner S.E."/>
            <person name="Batalov S."/>
            <person name="Forrest A.R."/>
            <person name="Zavolan M."/>
            <person name="Davis M.J."/>
            <person name="Wilming L.G."/>
            <person name="Aidinis V."/>
            <person name="Allen J.E."/>
            <person name="Ambesi-Impiombato A."/>
            <person name="Apweiler R."/>
            <person name="Aturaliya R.N."/>
            <person name="Bailey T.L."/>
            <person name="Bansal M."/>
            <person name="Baxter L."/>
            <person name="Beisel K.W."/>
            <person name="Bersano T."/>
            <person name="Bono H."/>
            <person name="Chalk A.M."/>
            <person name="Chiu K.P."/>
            <person name="Choudhary V."/>
            <person name="Christoffels A."/>
            <person name="Clutterbuck D.R."/>
            <person name="Crowe M.L."/>
            <person name="Dalla E."/>
            <person name="Dalrymple B.P."/>
            <person name="de Bono B."/>
            <person name="Della Gatta G."/>
            <person name="di Bernardo D."/>
            <person name="Down T."/>
            <person name="Engstrom P."/>
            <person name="Fagiolini M."/>
            <person name="Faulkner G."/>
            <person name="Fletcher C.F."/>
            <person name="Fukushima T."/>
            <person name="Furuno M."/>
            <person name="Futaki S."/>
            <person name="Gariboldi M."/>
            <person name="Georgii-Hemming P."/>
            <person name="Gingeras T.R."/>
            <person name="Gojobori T."/>
            <person name="Green R.E."/>
            <person name="Gustincich S."/>
            <person name="Harbers M."/>
            <person name="Hayashi Y."/>
            <person name="Hensch T.K."/>
            <person name="Hirokawa N."/>
            <person name="Hill D."/>
            <person name="Huminiecki L."/>
            <person name="Iacono M."/>
            <person name="Ikeo K."/>
            <person name="Iwama A."/>
            <person name="Ishikawa T."/>
            <person name="Jakt M."/>
            <person name="Kanapin A."/>
            <person name="Katoh M."/>
            <person name="Kawasawa Y."/>
            <person name="Kelso J."/>
            <person name="Kitamura H."/>
            <person name="Kitano H."/>
            <person name="Kollias G."/>
            <person name="Krishnan S.P."/>
            <person name="Kruger A."/>
            <person name="Kummerfeld S.K."/>
            <person name="Kurochkin I.V."/>
            <person name="Lareau L.F."/>
            <person name="Lazarevic D."/>
            <person name="Lipovich L."/>
            <person name="Liu J."/>
            <person name="Liuni S."/>
            <person name="McWilliam S."/>
            <person name="Madan Babu M."/>
            <person name="Madera M."/>
            <person name="Marchionni L."/>
            <person name="Matsuda H."/>
            <person name="Matsuzawa S."/>
            <person name="Miki H."/>
            <person name="Mignone F."/>
            <person name="Miyake S."/>
            <person name="Morris K."/>
            <person name="Mottagui-Tabar S."/>
            <person name="Mulder N."/>
            <person name="Nakano N."/>
            <person name="Nakauchi H."/>
            <person name="Ng P."/>
            <person name="Nilsson R."/>
            <person name="Nishiguchi S."/>
            <person name="Nishikawa S."/>
            <person name="Nori F."/>
            <person name="Ohara O."/>
            <person name="Okazaki Y."/>
            <person name="Orlando V."/>
            <person name="Pang K.C."/>
            <person name="Pavan W.J."/>
            <person name="Pavesi G."/>
            <person name="Pesole G."/>
            <person name="Petrovsky N."/>
            <person name="Piazza S."/>
            <person name="Reed J."/>
            <person name="Reid J.F."/>
            <person name="Ring B.Z."/>
            <person name="Ringwald M."/>
            <person name="Rost B."/>
            <person name="Ruan Y."/>
            <person name="Salzberg S.L."/>
            <person name="Sandelin A."/>
            <person name="Schneider C."/>
            <person name="Schoenbach C."/>
            <person name="Sekiguchi K."/>
            <person name="Semple C.A."/>
            <person name="Seno S."/>
            <person name="Sessa L."/>
            <person name="Sheng Y."/>
            <person name="Shibata Y."/>
            <person name="Shimada H."/>
            <person name="Shimada K."/>
            <person name="Silva D."/>
            <person name="Sinclair B."/>
            <person name="Sperling S."/>
            <person name="Stupka E."/>
            <person name="Sugiura K."/>
            <person name="Sultana R."/>
            <person name="Takenaka Y."/>
            <person name="Taki K."/>
            <person name="Tammoja K."/>
            <person name="Tan S.L."/>
            <person name="Tang S."/>
            <person name="Taylor M.S."/>
            <person name="Tegner J."/>
            <person name="Teichmann S.A."/>
            <person name="Ueda H.R."/>
            <person name="van Nimwegen E."/>
            <person name="Verardo R."/>
            <person name="Wei C.L."/>
            <person name="Yagi K."/>
            <person name="Yamanishi H."/>
            <person name="Zabarovsky E."/>
            <person name="Zhu S."/>
            <person name="Zimmer A."/>
            <person name="Hide W."/>
            <person name="Bult C."/>
            <person name="Grimmond S.M."/>
            <person name="Teasdale R.D."/>
            <person name="Liu E.T."/>
            <person name="Brusic V."/>
            <person name="Quackenbush J."/>
            <person name="Wahlestedt C."/>
            <person name="Mattick J.S."/>
            <person name="Hume D.A."/>
            <person name="Kai C."/>
            <person name="Sasaki D."/>
            <person name="Tomaru Y."/>
            <person name="Fukuda S."/>
            <person name="Kanamori-Katayama M."/>
            <person name="Suzuki M."/>
            <person name="Aoki J."/>
            <person name="Arakawa T."/>
            <person name="Iida J."/>
            <person name="Imamura K."/>
            <person name="Itoh M."/>
            <person name="Kato T."/>
            <person name="Kawaji H."/>
            <person name="Kawagashira N."/>
            <person name="Kawashima T."/>
            <person name="Kojima M."/>
            <person name="Kondo S."/>
            <person name="Konno H."/>
            <person name="Nakano K."/>
            <person name="Ninomiya N."/>
            <person name="Nishio T."/>
            <person name="Okada M."/>
            <person name="Plessy C."/>
            <person name="Shibata K."/>
            <person name="Shiraki T."/>
            <person name="Suzuki S."/>
            <person name="Tagami M."/>
            <person name="Waki K."/>
            <person name="Watahiki A."/>
            <person name="Okamura-Oho Y."/>
            <person name="Suzuki H."/>
            <person name="Kawai J."/>
            <person name="Hayashizaki Y."/>
        </authorList>
    </citation>
    <scope>NUCLEOTIDE SEQUENCE [LARGE SCALE MRNA]</scope>
    <source>
        <strain>C57BL/6J</strain>
        <tissue>Heart</tissue>
        <tissue>Stomach</tissue>
        <tissue>Tongue</tissue>
    </source>
</reference>
<reference key="2">
    <citation type="journal article" date="2004" name="Genome Res.">
        <title>The status, quality, and expansion of the NIH full-length cDNA project: the Mammalian Gene Collection (MGC).</title>
        <authorList>
            <consortium name="The MGC Project Team"/>
        </authorList>
    </citation>
    <scope>NUCLEOTIDE SEQUENCE [LARGE SCALE MRNA]</scope>
</reference>
<reference key="3">
    <citation type="journal article" date="2010" name="Cell">
        <title>A tissue-specific atlas of mouse protein phosphorylation and expression.</title>
        <authorList>
            <person name="Huttlin E.L."/>
            <person name="Jedrychowski M.P."/>
            <person name="Elias J.E."/>
            <person name="Goswami T."/>
            <person name="Rad R."/>
            <person name="Beausoleil S.A."/>
            <person name="Villen J."/>
            <person name="Haas W."/>
            <person name="Sowa M.E."/>
            <person name="Gygi S.P."/>
        </authorList>
    </citation>
    <scope>IDENTIFICATION BY MASS SPECTROMETRY [LARGE SCALE ANALYSIS]</scope>
    <source>
        <tissue>Brain</tissue>
        <tissue>Brown adipose tissue</tissue>
        <tissue>Heart</tissue>
        <tissue>Kidney</tissue>
        <tissue>Liver</tissue>
        <tissue>Lung</tissue>
        <tissue>Spleen</tissue>
        <tissue>Testis</tissue>
    </source>
</reference>
<evidence type="ECO:0000250" key="1">
    <source>
        <dbReference type="UniProtKB" id="Q9H0U6"/>
    </source>
</evidence>
<evidence type="ECO:0000255" key="2"/>
<evidence type="ECO:0000305" key="3"/>
<sequence length="180" mass="20677">MALRPRFWKCLSVCRKLECGFAALSTSSVPAVQPDVESKENEAVAPEFTNRNPRNLELLGVARKERGWATVWPNREFWHRLRVVKTQHHVEAFVEHLNGQVVVSASTREWAIKKHLYSTRNVVACESIGRVLAQRCLEAGINFMVYQPTPWEASSDSIKRLQNAMTESGVMLREPRRIYE</sequence>
<organism>
    <name type="scientific">Mus musculus</name>
    <name type="common">Mouse</name>
    <dbReference type="NCBI Taxonomy" id="10090"/>
    <lineage>
        <taxon>Eukaryota</taxon>
        <taxon>Metazoa</taxon>
        <taxon>Chordata</taxon>
        <taxon>Craniata</taxon>
        <taxon>Vertebrata</taxon>
        <taxon>Euteleostomi</taxon>
        <taxon>Mammalia</taxon>
        <taxon>Eutheria</taxon>
        <taxon>Euarchontoglires</taxon>
        <taxon>Glires</taxon>
        <taxon>Rodentia</taxon>
        <taxon>Myomorpha</taxon>
        <taxon>Muroidea</taxon>
        <taxon>Muridae</taxon>
        <taxon>Murinae</taxon>
        <taxon>Mus</taxon>
        <taxon>Mus</taxon>
    </lineage>
</organism>
<name>RM18_MOUSE</name>
<gene>
    <name type="primary">Mrpl18</name>
</gene>
<dbReference type="EMBL" id="AK003104">
    <property type="protein sequence ID" value="BAB22567.1"/>
    <property type="molecule type" value="mRNA"/>
</dbReference>
<dbReference type="EMBL" id="AK008680">
    <property type="protein sequence ID" value="BAB25828.1"/>
    <property type="molecule type" value="mRNA"/>
</dbReference>
<dbReference type="EMBL" id="AK010150">
    <property type="protein sequence ID" value="BAB26735.1"/>
    <property type="molecule type" value="mRNA"/>
</dbReference>
<dbReference type="EMBL" id="BC011425">
    <property type="protein sequence ID" value="AAH11425.1"/>
    <property type="molecule type" value="mRNA"/>
</dbReference>
<dbReference type="CCDS" id="CCDS28396.1"/>
<dbReference type="RefSeq" id="NP_080586.1">
    <property type="nucleotide sequence ID" value="NM_026310.3"/>
</dbReference>
<dbReference type="SMR" id="Q9CQL5"/>
<dbReference type="BioGRID" id="212363">
    <property type="interactions" value="21"/>
</dbReference>
<dbReference type="ComplexPortal" id="CPX-5302">
    <property type="entry name" value="39S mitochondrial large ribosomal subunit"/>
</dbReference>
<dbReference type="FunCoup" id="Q9CQL5">
    <property type="interactions" value="2335"/>
</dbReference>
<dbReference type="STRING" id="10090.ENSMUSP00000078123"/>
<dbReference type="PhosphoSitePlus" id="Q9CQL5"/>
<dbReference type="PaxDb" id="10090-ENSMUSP00000078123"/>
<dbReference type="PeptideAtlas" id="Q9CQL5"/>
<dbReference type="ProteomicsDB" id="299908"/>
<dbReference type="Pumba" id="Q9CQL5"/>
<dbReference type="Antibodypedia" id="33462">
    <property type="antibodies" value="120 antibodies from 21 providers"/>
</dbReference>
<dbReference type="DNASU" id="67681"/>
<dbReference type="Ensembl" id="ENSMUST00000079121.4">
    <property type="protein sequence ID" value="ENSMUSP00000078123.4"/>
    <property type="gene ID" value="ENSMUSG00000057388.10"/>
</dbReference>
<dbReference type="GeneID" id="67681"/>
<dbReference type="KEGG" id="mmu:67681"/>
<dbReference type="UCSC" id="uc008alj.1">
    <property type="organism name" value="mouse"/>
</dbReference>
<dbReference type="AGR" id="MGI:1914931"/>
<dbReference type="CTD" id="29074"/>
<dbReference type="MGI" id="MGI:1914931">
    <property type="gene designation" value="Mrpl18"/>
</dbReference>
<dbReference type="VEuPathDB" id="HostDB:ENSMUSG00000057388"/>
<dbReference type="eggNOG" id="KOG3333">
    <property type="taxonomic scope" value="Eukaryota"/>
</dbReference>
<dbReference type="GeneTree" id="ENSGT00390000006394"/>
<dbReference type="HOGENOM" id="CLU_108540_0_0_1"/>
<dbReference type="InParanoid" id="Q9CQL5"/>
<dbReference type="OMA" id="TSEWAIK"/>
<dbReference type="OrthoDB" id="1932324at2759"/>
<dbReference type="PhylomeDB" id="Q9CQL5"/>
<dbReference type="TreeFam" id="TF313292"/>
<dbReference type="Reactome" id="R-MMU-5389840">
    <property type="pathway name" value="Mitochondrial translation elongation"/>
</dbReference>
<dbReference type="Reactome" id="R-MMU-5419276">
    <property type="pathway name" value="Mitochondrial translation termination"/>
</dbReference>
<dbReference type="BioGRID-ORCS" id="67681">
    <property type="hits" value="19 hits in 76 CRISPR screens"/>
</dbReference>
<dbReference type="ChiTaRS" id="Mrpl18">
    <property type="organism name" value="mouse"/>
</dbReference>
<dbReference type="PRO" id="PR:Q9CQL5"/>
<dbReference type="Proteomes" id="UP000000589">
    <property type="component" value="Chromosome 17"/>
</dbReference>
<dbReference type="RNAct" id="Q9CQL5">
    <property type="molecule type" value="protein"/>
</dbReference>
<dbReference type="Bgee" id="ENSMUSG00000057388">
    <property type="expression patterns" value="Expressed in primary oocyte and 65 other cell types or tissues"/>
</dbReference>
<dbReference type="GO" id="GO:0005743">
    <property type="term" value="C:mitochondrial inner membrane"/>
    <property type="evidence" value="ECO:0000303"/>
    <property type="project" value="ComplexPortal"/>
</dbReference>
<dbReference type="GO" id="GO:0005762">
    <property type="term" value="C:mitochondrial large ribosomal subunit"/>
    <property type="evidence" value="ECO:0000250"/>
    <property type="project" value="UniProtKB"/>
</dbReference>
<dbReference type="GO" id="GO:0005739">
    <property type="term" value="C:mitochondrion"/>
    <property type="evidence" value="ECO:0007005"/>
    <property type="project" value="MGI"/>
</dbReference>
<dbReference type="GO" id="GO:0008097">
    <property type="term" value="F:5S rRNA binding"/>
    <property type="evidence" value="ECO:0000250"/>
    <property type="project" value="UniProtKB"/>
</dbReference>
<dbReference type="GO" id="GO:0003735">
    <property type="term" value="F:structural constituent of ribosome"/>
    <property type="evidence" value="ECO:0007669"/>
    <property type="project" value="InterPro"/>
</dbReference>
<dbReference type="GO" id="GO:0032543">
    <property type="term" value="P:mitochondrial translation"/>
    <property type="evidence" value="ECO:0000303"/>
    <property type="project" value="ComplexPortal"/>
</dbReference>
<dbReference type="GO" id="GO:0035928">
    <property type="term" value="P:rRNA import into mitochondrion"/>
    <property type="evidence" value="ECO:0000250"/>
    <property type="project" value="UniProtKB"/>
</dbReference>
<dbReference type="CDD" id="cd00432">
    <property type="entry name" value="Ribosomal_L18_L5e"/>
    <property type="match status" value="1"/>
</dbReference>
<dbReference type="FunFam" id="3.30.420.80:FF:000005">
    <property type="entry name" value="39S ribosomal protein L18, mitochondrial"/>
    <property type="match status" value="1"/>
</dbReference>
<dbReference type="Gene3D" id="3.30.420.80">
    <property type="entry name" value="Ribosomal protein S11"/>
    <property type="match status" value="1"/>
</dbReference>
<dbReference type="InterPro" id="IPR005484">
    <property type="entry name" value="Ribosomal_uL18_bac/euk"/>
</dbReference>
<dbReference type="InterPro" id="IPR036967">
    <property type="entry name" value="Ribosomal_uS11_sf"/>
</dbReference>
<dbReference type="PANTHER" id="PTHR12899">
    <property type="entry name" value="39S RIBOSOMAL PROTEIN L18, MITOCHONDRIAL"/>
    <property type="match status" value="1"/>
</dbReference>
<dbReference type="PANTHER" id="PTHR12899:SF3">
    <property type="entry name" value="LARGE RIBOSOMAL SUBUNIT PROTEIN UL18M"/>
    <property type="match status" value="1"/>
</dbReference>
<dbReference type="Pfam" id="PF00861">
    <property type="entry name" value="Ribosomal_L18p"/>
    <property type="match status" value="1"/>
</dbReference>
<dbReference type="SUPFAM" id="SSF53137">
    <property type="entry name" value="Translational machinery components"/>
    <property type="match status" value="1"/>
</dbReference>
<keyword id="KW-0143">Chaperone</keyword>
<keyword id="KW-0496">Mitochondrion</keyword>
<keyword id="KW-1185">Reference proteome</keyword>
<keyword id="KW-0687">Ribonucleoprotein</keyword>
<keyword id="KW-0689">Ribosomal protein</keyword>
<keyword id="KW-0694">RNA-binding</keyword>
<keyword id="KW-0809">Transit peptide</keyword>
<keyword id="KW-0813">Transport</keyword>
<feature type="transit peptide" description="Mitochondrion" evidence="2">
    <location>
        <begin position="1"/>
        <end status="unknown"/>
    </location>
</feature>
<feature type="chain" id="PRO_0000030557" description="Large ribosomal subunit protein uL18m">
    <location>
        <begin status="unknown"/>
        <end position="180"/>
    </location>
</feature>
<feature type="sequence conflict" description="In Ref. 1; BAB26735." evidence="3" ref="1">
    <original>V</original>
    <variation>A</variation>
    <location>
        <position position="29"/>
    </location>
</feature>